<organism>
    <name type="scientific">Homo sapiens</name>
    <name type="common">Human</name>
    <dbReference type="NCBI Taxonomy" id="9606"/>
    <lineage>
        <taxon>Eukaryota</taxon>
        <taxon>Metazoa</taxon>
        <taxon>Chordata</taxon>
        <taxon>Craniata</taxon>
        <taxon>Vertebrata</taxon>
        <taxon>Euteleostomi</taxon>
        <taxon>Mammalia</taxon>
        <taxon>Eutheria</taxon>
        <taxon>Euarchontoglires</taxon>
        <taxon>Primates</taxon>
        <taxon>Haplorrhini</taxon>
        <taxon>Catarrhini</taxon>
        <taxon>Hominidae</taxon>
        <taxon>Homo</taxon>
    </lineage>
</organism>
<keyword id="KW-0175">Coiled coil</keyword>
<keyword id="KW-0539">Nucleus</keyword>
<keyword id="KW-1267">Proteomics identification</keyword>
<keyword id="KW-1185">Reference proteome</keyword>
<keyword id="KW-0678">Repressor</keyword>
<keyword id="KW-0804">Transcription</keyword>
<keyword id="KW-0805">Transcription regulation</keyword>
<keyword id="KW-0043">Tumor suppressor</keyword>
<dbReference type="EMBL" id="AF115967">
    <property type="protein sequence ID" value="AAM18531.1"/>
    <property type="molecule type" value="mRNA"/>
</dbReference>
<dbReference type="EMBL" id="AK058078">
    <property type="protein sequence ID" value="BAB71653.1"/>
    <property type="molecule type" value="mRNA"/>
</dbReference>
<dbReference type="EMBL" id="AK223529">
    <property type="protein sequence ID" value="BAD97249.1"/>
    <property type="molecule type" value="mRNA"/>
</dbReference>
<dbReference type="EMBL" id="AP001714">
    <property type="status" value="NOT_ANNOTATED_CDS"/>
    <property type="molecule type" value="Genomic_DNA"/>
</dbReference>
<dbReference type="EMBL" id="BC033855">
    <property type="protein sequence ID" value="AAH33855.1"/>
    <property type="molecule type" value="mRNA"/>
</dbReference>
<dbReference type="CCDS" id="CCDS13616.1"/>
<dbReference type="RefSeq" id="NP_653260.1">
    <property type="nucleotide sequence ID" value="NM_144659.7"/>
</dbReference>
<dbReference type="SMR" id="Q8TDR4"/>
<dbReference type="BioGRID" id="126602">
    <property type="interactions" value="71"/>
</dbReference>
<dbReference type="FunCoup" id="Q8TDR4">
    <property type="interactions" value="28"/>
</dbReference>
<dbReference type="IntAct" id="Q8TDR4">
    <property type="interactions" value="74"/>
</dbReference>
<dbReference type="STRING" id="9606.ENSP00000300258"/>
<dbReference type="iPTMnet" id="Q8TDR4"/>
<dbReference type="PhosphoSitePlus" id="Q8TDR4"/>
<dbReference type="BioMuta" id="TCP10L"/>
<dbReference type="DMDM" id="23822246"/>
<dbReference type="jPOST" id="Q8TDR4"/>
<dbReference type="MassIVE" id="Q8TDR4"/>
<dbReference type="PaxDb" id="9606-ENSP00000300258"/>
<dbReference type="PeptideAtlas" id="Q8TDR4"/>
<dbReference type="ProteomicsDB" id="74333"/>
<dbReference type="Antibodypedia" id="34914">
    <property type="antibodies" value="66 antibodies from 18 providers"/>
</dbReference>
<dbReference type="DNASU" id="140290"/>
<dbReference type="Ensembl" id="ENST00000300258.8">
    <property type="protein sequence ID" value="ENSP00000300258.3"/>
    <property type="gene ID" value="ENSG00000242220.9"/>
</dbReference>
<dbReference type="Ensembl" id="ENST00000674156.1">
    <property type="protein sequence ID" value="ENSP00000501209.1"/>
    <property type="gene ID" value="ENSG00000242220.9"/>
</dbReference>
<dbReference type="GeneID" id="140290"/>
<dbReference type="KEGG" id="hsa:140290"/>
<dbReference type="MANE-Select" id="ENST00000300258.8">
    <property type="protein sequence ID" value="ENSP00000300258.3"/>
    <property type="RefSeq nucleotide sequence ID" value="NM_144659.7"/>
    <property type="RefSeq protein sequence ID" value="NP_653260.1"/>
</dbReference>
<dbReference type="UCSC" id="uc002ypw.5">
    <property type="organism name" value="human"/>
</dbReference>
<dbReference type="AGR" id="HGNC:11657"/>
<dbReference type="CTD" id="140290"/>
<dbReference type="DisGeNET" id="140290"/>
<dbReference type="GeneCards" id="TCP10L"/>
<dbReference type="HGNC" id="HGNC:11657">
    <property type="gene designation" value="TCP10L"/>
</dbReference>
<dbReference type="HPA" id="ENSG00000242220">
    <property type="expression patterns" value="Tissue enriched (testis)"/>
</dbReference>
<dbReference type="MIM" id="608365">
    <property type="type" value="gene"/>
</dbReference>
<dbReference type="neXtProt" id="NX_Q8TDR4"/>
<dbReference type="OpenTargets" id="ENSG00000242220"/>
<dbReference type="PharmGKB" id="PA36408"/>
<dbReference type="VEuPathDB" id="HostDB:ENSG00000242220"/>
<dbReference type="eggNOG" id="ENOG502TE43">
    <property type="taxonomic scope" value="Eukaryota"/>
</dbReference>
<dbReference type="GeneTree" id="ENSGT00530000063927"/>
<dbReference type="InParanoid" id="Q8TDR4"/>
<dbReference type="OMA" id="QGTHPED"/>
<dbReference type="OrthoDB" id="9484273at2759"/>
<dbReference type="PAN-GO" id="Q8TDR4">
    <property type="GO annotations" value="3 GO annotations based on evolutionary models"/>
</dbReference>
<dbReference type="PhylomeDB" id="Q8TDR4"/>
<dbReference type="PathwayCommons" id="Q8TDR4"/>
<dbReference type="SignaLink" id="Q8TDR4"/>
<dbReference type="BioGRID-ORCS" id="140290">
    <property type="hits" value="11 hits in 1141 CRISPR screens"/>
</dbReference>
<dbReference type="GeneWiki" id="TCP10L"/>
<dbReference type="GenomeRNAi" id="140290"/>
<dbReference type="Pharos" id="Q8TDR4">
    <property type="development level" value="Tbio"/>
</dbReference>
<dbReference type="PRO" id="PR:Q8TDR4"/>
<dbReference type="Proteomes" id="UP000005640">
    <property type="component" value="Chromosome 21"/>
</dbReference>
<dbReference type="RNAct" id="Q8TDR4">
    <property type="molecule type" value="protein"/>
</dbReference>
<dbReference type="Bgee" id="ENSG00000242220">
    <property type="expression patterns" value="Expressed in left testis and 93 other cell types or tissues"/>
</dbReference>
<dbReference type="ExpressionAtlas" id="Q8TDR4">
    <property type="expression patterns" value="baseline and differential"/>
</dbReference>
<dbReference type="GO" id="GO:0005634">
    <property type="term" value="C:nucleus"/>
    <property type="evidence" value="ECO:0000314"/>
    <property type="project" value="UniProtKB"/>
</dbReference>
<dbReference type="GO" id="GO:0140297">
    <property type="term" value="F:DNA-binding transcription factor binding"/>
    <property type="evidence" value="ECO:0000314"/>
    <property type="project" value="UniProtKB"/>
</dbReference>
<dbReference type="GO" id="GO:0042802">
    <property type="term" value="F:identical protein binding"/>
    <property type="evidence" value="ECO:0000353"/>
    <property type="project" value="IntAct"/>
</dbReference>
<dbReference type="GO" id="GO:0003714">
    <property type="term" value="F:transcription corepressor activity"/>
    <property type="evidence" value="ECO:0000314"/>
    <property type="project" value="UniProtKB"/>
</dbReference>
<dbReference type="GO" id="GO:0000122">
    <property type="term" value="P:negative regulation of transcription by RNA polymerase II"/>
    <property type="evidence" value="ECO:0000314"/>
    <property type="project" value="UniProtKB"/>
</dbReference>
<dbReference type="InterPro" id="IPR026581">
    <property type="entry name" value="TCP10L/CENPJ"/>
</dbReference>
<dbReference type="PANTHER" id="PTHR10331">
    <property type="entry name" value="T COMPLEX PROTEIN 10"/>
    <property type="match status" value="1"/>
</dbReference>
<dbReference type="PANTHER" id="PTHR10331:SF25">
    <property type="entry name" value="T-COMPLEX PROTEIN 10A-RELATED"/>
    <property type="match status" value="1"/>
</dbReference>
<protein>
    <recommendedName>
        <fullName>T-complex protein 10A homolog 1</fullName>
        <shortName>T-complex protein 10A-1</shortName>
        <shortName>TCP10A-1</shortName>
    </recommendedName>
    <alternativeName>
        <fullName>TCP10-like</fullName>
    </alternativeName>
</protein>
<feature type="chain" id="PRO_0000072462" description="T-complex protein 10A homolog 1">
    <location>
        <begin position="1"/>
        <end position="215"/>
    </location>
</feature>
<feature type="region of interest" description="Disordered" evidence="2">
    <location>
        <begin position="1"/>
        <end position="25"/>
    </location>
</feature>
<feature type="region of interest" description="Leucine-zipper">
    <location>
        <begin position="75"/>
        <end position="96"/>
    </location>
</feature>
<feature type="region of interest" description="Disordered" evidence="2">
    <location>
        <begin position="150"/>
        <end position="215"/>
    </location>
</feature>
<feature type="coiled-coil region" evidence="1">
    <location>
        <begin position="69"/>
        <end position="110"/>
    </location>
</feature>
<feature type="compositionally biased region" description="Basic and acidic residues" evidence="2">
    <location>
        <begin position="7"/>
        <end position="19"/>
    </location>
</feature>
<feature type="compositionally biased region" description="Polar residues" evidence="2">
    <location>
        <begin position="150"/>
        <end position="163"/>
    </location>
</feature>
<feature type="sequence variant" id="VAR_016099" description="In dbSNP:rs9622." evidence="3 9">
    <original>H</original>
    <variation>R</variation>
    <location>
        <position position="145"/>
    </location>
</feature>
<feature type="sequence variant" id="VAR_049089" description="In dbSNP:rs16989521.">
    <original>R</original>
    <variation>H</variation>
    <location>
        <position position="194"/>
    </location>
</feature>
<feature type="mutagenesis site" description="Greatly decreases in vitro transcription inhibition activity." evidence="4">
    <original>L</original>
    <variation>F</variation>
    <location>
        <position position="82"/>
    </location>
</feature>
<feature type="mutagenesis site" description="Disrupts self-association." evidence="7">
    <original>L</original>
    <variation>P</variation>
    <location>
        <position position="89"/>
    </location>
</feature>
<sequence>MLAGQLEARDPKEGTHPEDPCPGAGAVMEKTAVAAEVLTEDCNTGEMPPLQQQIIRLHQELGRQKSLWADVHGKLRSHIDALREQNMELREKLRALQLQRWKARKKSAASPHAGQESHTLALEPAFGKISPLSADEETIPKYAGHKNQSATLLGQRSSSNNSAPPKPMSLKIERISSWKTPPQENRDKNLSRRRQDRRATPTGRPTPCAERRGGV</sequence>
<name>TCP1L_HUMAN</name>
<gene>
    <name type="primary">TCP10L</name>
    <name type="ORF">PRED77</name>
</gene>
<evidence type="ECO:0000255" key="1"/>
<evidence type="ECO:0000256" key="2">
    <source>
        <dbReference type="SAM" id="MobiDB-lite"/>
    </source>
</evidence>
<evidence type="ECO:0000269" key="3">
    <source>
    </source>
</evidence>
<evidence type="ECO:0000269" key="4">
    <source>
    </source>
</evidence>
<evidence type="ECO:0000269" key="5">
    <source>
    </source>
</evidence>
<evidence type="ECO:0000269" key="6">
    <source>
    </source>
</evidence>
<evidence type="ECO:0000269" key="7">
    <source>
    </source>
</evidence>
<evidence type="ECO:0000269" key="8">
    <source>
    </source>
</evidence>
<evidence type="ECO:0000269" key="9">
    <source ref="3"/>
</evidence>
<evidence type="ECO:0000305" key="10"/>
<reference key="1">
    <citation type="journal article" date="2003" name="J. Hum. Genet.">
        <title>Identification of a novel liver-specific expressed gene, TCP10L, encoding a human leucine zipper protein with transcription inhibition activity.</title>
        <authorList>
            <person name="Chen Z."/>
            <person name="Yu L."/>
            <person name="Wu H."/>
            <person name="Yu J."/>
            <person name="Zhang L."/>
            <person name="Jiang D."/>
            <person name="Ma L."/>
            <person name="Li D."/>
            <person name="Zhao S."/>
        </authorList>
    </citation>
    <scope>NUCLEOTIDE SEQUENCE [MRNA]</scope>
    <scope>FUNCTION</scope>
    <scope>SUBCELLULAR LOCATION</scope>
    <scope>TISSUE SPECIFICITY</scope>
    <scope>MUTAGENESIS OF LEU-82</scope>
</reference>
<reference key="2">
    <citation type="journal article" date="2004" name="Nat. Genet.">
        <title>Complete sequencing and characterization of 21,243 full-length human cDNAs.</title>
        <authorList>
            <person name="Ota T."/>
            <person name="Suzuki Y."/>
            <person name="Nishikawa T."/>
            <person name="Otsuki T."/>
            <person name="Sugiyama T."/>
            <person name="Irie R."/>
            <person name="Wakamatsu A."/>
            <person name="Hayashi K."/>
            <person name="Sato H."/>
            <person name="Nagai K."/>
            <person name="Kimura K."/>
            <person name="Makita H."/>
            <person name="Sekine M."/>
            <person name="Obayashi M."/>
            <person name="Nishi T."/>
            <person name="Shibahara T."/>
            <person name="Tanaka T."/>
            <person name="Ishii S."/>
            <person name="Yamamoto J."/>
            <person name="Saito K."/>
            <person name="Kawai Y."/>
            <person name="Isono Y."/>
            <person name="Nakamura Y."/>
            <person name="Nagahari K."/>
            <person name="Murakami K."/>
            <person name="Yasuda T."/>
            <person name="Iwayanagi T."/>
            <person name="Wagatsuma M."/>
            <person name="Shiratori A."/>
            <person name="Sudo H."/>
            <person name="Hosoiri T."/>
            <person name="Kaku Y."/>
            <person name="Kodaira H."/>
            <person name="Kondo H."/>
            <person name="Sugawara M."/>
            <person name="Takahashi M."/>
            <person name="Kanda K."/>
            <person name="Yokoi T."/>
            <person name="Furuya T."/>
            <person name="Kikkawa E."/>
            <person name="Omura Y."/>
            <person name="Abe K."/>
            <person name="Kamihara K."/>
            <person name="Katsuta N."/>
            <person name="Sato K."/>
            <person name="Tanikawa M."/>
            <person name="Yamazaki M."/>
            <person name="Ninomiya K."/>
            <person name="Ishibashi T."/>
            <person name="Yamashita H."/>
            <person name="Murakawa K."/>
            <person name="Fujimori K."/>
            <person name="Tanai H."/>
            <person name="Kimata M."/>
            <person name="Watanabe M."/>
            <person name="Hiraoka S."/>
            <person name="Chiba Y."/>
            <person name="Ishida S."/>
            <person name="Ono Y."/>
            <person name="Takiguchi S."/>
            <person name="Watanabe S."/>
            <person name="Yosida M."/>
            <person name="Hotuta T."/>
            <person name="Kusano J."/>
            <person name="Kanehori K."/>
            <person name="Takahashi-Fujii A."/>
            <person name="Hara H."/>
            <person name="Tanase T.-O."/>
            <person name="Nomura Y."/>
            <person name="Togiya S."/>
            <person name="Komai F."/>
            <person name="Hara R."/>
            <person name="Takeuchi K."/>
            <person name="Arita M."/>
            <person name="Imose N."/>
            <person name="Musashino K."/>
            <person name="Yuuki H."/>
            <person name="Oshima A."/>
            <person name="Sasaki N."/>
            <person name="Aotsuka S."/>
            <person name="Yoshikawa Y."/>
            <person name="Matsunawa H."/>
            <person name="Ichihara T."/>
            <person name="Shiohata N."/>
            <person name="Sano S."/>
            <person name="Moriya S."/>
            <person name="Momiyama H."/>
            <person name="Satoh N."/>
            <person name="Takami S."/>
            <person name="Terashima Y."/>
            <person name="Suzuki O."/>
            <person name="Nakagawa S."/>
            <person name="Senoh A."/>
            <person name="Mizoguchi H."/>
            <person name="Goto Y."/>
            <person name="Shimizu F."/>
            <person name="Wakebe H."/>
            <person name="Hishigaki H."/>
            <person name="Watanabe T."/>
            <person name="Sugiyama A."/>
            <person name="Takemoto M."/>
            <person name="Kawakami B."/>
            <person name="Yamazaki M."/>
            <person name="Watanabe K."/>
            <person name="Kumagai A."/>
            <person name="Itakura S."/>
            <person name="Fukuzumi Y."/>
            <person name="Fujimori Y."/>
            <person name="Komiyama M."/>
            <person name="Tashiro H."/>
            <person name="Tanigami A."/>
            <person name="Fujiwara T."/>
            <person name="Ono T."/>
            <person name="Yamada K."/>
            <person name="Fujii Y."/>
            <person name="Ozaki K."/>
            <person name="Hirao M."/>
            <person name="Ohmori Y."/>
            <person name="Kawabata A."/>
            <person name="Hikiji T."/>
            <person name="Kobatake N."/>
            <person name="Inagaki H."/>
            <person name="Ikema Y."/>
            <person name="Okamoto S."/>
            <person name="Okitani R."/>
            <person name="Kawakami T."/>
            <person name="Noguchi S."/>
            <person name="Itoh T."/>
            <person name="Shigeta K."/>
            <person name="Senba T."/>
            <person name="Matsumura K."/>
            <person name="Nakajima Y."/>
            <person name="Mizuno T."/>
            <person name="Morinaga M."/>
            <person name="Sasaki M."/>
            <person name="Togashi T."/>
            <person name="Oyama M."/>
            <person name="Hata H."/>
            <person name="Watanabe M."/>
            <person name="Komatsu T."/>
            <person name="Mizushima-Sugano J."/>
            <person name="Satoh T."/>
            <person name="Shirai Y."/>
            <person name="Takahashi Y."/>
            <person name="Nakagawa K."/>
            <person name="Okumura K."/>
            <person name="Nagase T."/>
            <person name="Nomura N."/>
            <person name="Kikuchi H."/>
            <person name="Masuho Y."/>
            <person name="Yamashita R."/>
            <person name="Nakai K."/>
            <person name="Yada T."/>
            <person name="Nakamura Y."/>
            <person name="Ohara O."/>
            <person name="Isogai T."/>
            <person name="Sugano S."/>
        </authorList>
    </citation>
    <scope>NUCLEOTIDE SEQUENCE [LARGE SCALE MRNA]</scope>
    <source>
        <tissue>Testis</tissue>
    </source>
</reference>
<reference key="3">
    <citation type="submission" date="2005-04" db="EMBL/GenBank/DDBJ databases">
        <authorList>
            <person name="Totoki Y."/>
            <person name="Toyoda A."/>
            <person name="Takeda T."/>
            <person name="Sakaki Y."/>
            <person name="Tanaka A."/>
            <person name="Yokoyama S."/>
        </authorList>
    </citation>
    <scope>NUCLEOTIDE SEQUENCE [LARGE SCALE MRNA]</scope>
    <scope>VARIANT ARG-145</scope>
    <source>
        <tissue>Testis</tissue>
    </source>
</reference>
<reference key="4">
    <citation type="journal article" date="2000" name="Nature">
        <title>The DNA sequence of human chromosome 21.</title>
        <authorList>
            <person name="Hattori M."/>
            <person name="Fujiyama A."/>
            <person name="Taylor T.D."/>
            <person name="Watanabe H."/>
            <person name="Yada T."/>
            <person name="Park H.-S."/>
            <person name="Toyoda A."/>
            <person name="Ishii K."/>
            <person name="Totoki Y."/>
            <person name="Choi D.-K."/>
            <person name="Groner Y."/>
            <person name="Soeda E."/>
            <person name="Ohki M."/>
            <person name="Takagi T."/>
            <person name="Sakaki Y."/>
            <person name="Taudien S."/>
            <person name="Blechschmidt K."/>
            <person name="Polley A."/>
            <person name="Menzel U."/>
            <person name="Delabar J."/>
            <person name="Kumpf K."/>
            <person name="Lehmann R."/>
            <person name="Patterson D."/>
            <person name="Reichwald K."/>
            <person name="Rump A."/>
            <person name="Schillhabel M."/>
            <person name="Schudy A."/>
            <person name="Zimmermann W."/>
            <person name="Rosenthal A."/>
            <person name="Kudoh J."/>
            <person name="Shibuya K."/>
            <person name="Kawasaki K."/>
            <person name="Asakawa S."/>
            <person name="Shintani A."/>
            <person name="Sasaki T."/>
            <person name="Nagamine K."/>
            <person name="Mitsuyama S."/>
            <person name="Antonarakis S.E."/>
            <person name="Minoshima S."/>
            <person name="Shimizu N."/>
            <person name="Nordsiek G."/>
            <person name="Hornischer K."/>
            <person name="Brandt P."/>
            <person name="Scharfe M."/>
            <person name="Schoen O."/>
            <person name="Desario A."/>
            <person name="Reichelt J."/>
            <person name="Kauer G."/>
            <person name="Bloecker H."/>
            <person name="Ramser J."/>
            <person name="Beck A."/>
            <person name="Klages S."/>
            <person name="Hennig S."/>
            <person name="Riesselmann L."/>
            <person name="Dagand E."/>
            <person name="Wehrmeyer S."/>
            <person name="Borzym K."/>
            <person name="Gardiner K."/>
            <person name="Nizetic D."/>
            <person name="Francis F."/>
            <person name="Lehrach H."/>
            <person name="Reinhardt R."/>
            <person name="Yaspo M.-L."/>
        </authorList>
    </citation>
    <scope>NUCLEOTIDE SEQUENCE [LARGE SCALE GENOMIC DNA]</scope>
    <scope>VARIANT ARG-145</scope>
</reference>
<reference key="5">
    <citation type="journal article" date="2004" name="Genome Res.">
        <title>The status, quality, and expansion of the NIH full-length cDNA project: the Mammalian Gene Collection (MGC).</title>
        <authorList>
            <consortium name="The MGC Project Team"/>
        </authorList>
    </citation>
    <scope>NUCLEOTIDE SEQUENCE [LARGE SCALE MRNA]</scope>
    <source>
        <tissue>Brain</tissue>
    </source>
</reference>
<reference key="6">
    <citation type="journal article" date="2005" name="Int. J. Androl.">
        <title>TCP10L is expressed specifically in spermatogenic cells and binds to death associated protein kinase-3.</title>
        <authorList>
            <person name="Yu H."/>
            <person name="Jiang D."/>
            <person name="Guo Z."/>
            <person name="Saiyin H."/>
            <person name="Guo J."/>
            <person name="Wang X."/>
            <person name="Yu L."/>
        </authorList>
    </citation>
    <scope>SUBCELLULAR LOCATION</scope>
    <scope>INTERACTION WITH ZIPK/DAPK3</scope>
</reference>
<reference key="7">
    <citation type="journal article" date="2004" name="J. Biochem. Mol. Biol.">
        <title>Human liver specific transcriptional factor TCP10L binds to MAD4.</title>
        <authorList>
            <person name="Jiang D.J."/>
            <person name="Yu H.X."/>
            <person name="Hexige S.Y."/>
            <person name="Guo Z.K."/>
            <person name="Wang X."/>
            <person name="Ma L.J."/>
            <person name="Chen Z."/>
            <person name="Zhao S.Y."/>
            <person name="Yu L."/>
        </authorList>
    </citation>
    <scope>INTERACTION WITH MAD4</scope>
</reference>
<reference key="8">
    <citation type="journal article" date="2008" name="Mol. Biol. Rep.">
        <title>Identification of TCP10L as primate-specific gene derived via segmental duplication and homodimerization of TCP10L through the leucine zipper motif.</title>
        <authorList>
            <person name="Zhong Z."/>
            <person name="Qiu J."/>
            <person name="Chen X."/>
            <person name="Wan B."/>
            <person name="Ni J."/>
            <person name="Yang Y."/>
            <person name="Bai M."/>
            <person name="Zhang H."/>
            <person name="Yu L."/>
        </authorList>
    </citation>
    <scope>SELF-ASSOCIATION</scope>
    <scope>MUTAGENESIS OF LEU-89</scope>
</reference>
<reference key="9">
    <citation type="journal article" date="2014" name="Biochem. Biophys. Res. Commun.">
        <title>TCP10L acts as a tumor suppressor by inhibiting cell proliferation in hepatocellular carcinoma.</title>
        <authorList>
            <person name="Zuo J."/>
            <person name="Cai H."/>
            <person name="Wu Y."/>
            <person name="Ma H."/>
            <person name="Jiang W."/>
            <person name="Liu C."/>
            <person name="Han D."/>
            <person name="Ji G."/>
            <person name="Yu L."/>
        </authorList>
    </citation>
    <scope>FUNCTION</scope>
</reference>
<proteinExistence type="evidence at protein level"/>
<comment type="function">
    <text evidence="4 8">May be involved in transcriptional regulation. Has in vitro transcription inhibition activity. Acts as a tumor suppressor in hepatocellular carcinoma (HCC) cells.</text>
</comment>
<comment type="subunit">
    <text evidence="5 6 7">Self-associates (via leucine zipper). Interacts (via leucine zipper) with ZIPK/DAPK3 (via leucine zipper). Interacts with MAD4.</text>
</comment>
<comment type="interaction">
    <interactant intactId="EBI-3923210">
        <id>Q8TDR4</id>
    </interactant>
    <interactant intactId="EBI-11282723">
        <id>Q9Y5Z0</id>
        <label>BACE2</label>
    </interactant>
    <organismsDiffer>false</organismsDiffer>
    <experiments>3</experiments>
</comment>
<comment type="interaction">
    <interactant intactId="EBI-3923210">
        <id>Q8TDR4</id>
    </interactant>
    <interactant intactId="EBI-739879">
        <id>Q53TS8</id>
        <label>C2CD6</label>
    </interactant>
    <organismsDiffer>false</organismsDiffer>
    <experiments>3</experiments>
</comment>
<comment type="interaction">
    <interactant intactId="EBI-3923210">
        <id>Q8TDR4</id>
    </interactant>
    <interactant intactId="EBI-10171570">
        <id>Q68D86</id>
        <label>CCDC102B</label>
    </interactant>
    <organismsDiffer>false</organismsDiffer>
    <experiments>3</experiments>
</comment>
<comment type="interaction">
    <interactant intactId="EBI-3923210">
        <id>Q8TDR4</id>
    </interactant>
    <interactant intactId="EBI-10961624">
        <id>Q2TAC2-2</id>
        <label>CCDC57</label>
    </interactant>
    <organismsDiffer>false</organismsDiffer>
    <experiments>3</experiments>
</comment>
<comment type="interaction">
    <interactant intactId="EBI-3923210">
        <id>Q8TDR4</id>
    </interactant>
    <interactant intactId="EBI-6873045">
        <id>Q6NSX1</id>
        <label>CCDC70</label>
    </interactant>
    <organismsDiffer>false</organismsDiffer>
    <experiments>3</experiments>
</comment>
<comment type="interaction">
    <interactant intactId="EBI-3923210">
        <id>Q8TDR4</id>
    </interactant>
    <interactant intactId="EBI-11063830">
        <id>Q86X02</id>
        <label>CDR2L</label>
    </interactant>
    <organismsDiffer>false</organismsDiffer>
    <experiments>3</experiments>
</comment>
<comment type="interaction">
    <interactant intactId="EBI-3923210">
        <id>Q8TDR4</id>
    </interactant>
    <interactant intactId="EBI-725145">
        <id>O76071</id>
        <label>CIAO1</label>
    </interactant>
    <organismsDiffer>false</organismsDiffer>
    <experiments>3</experiments>
</comment>
<comment type="interaction">
    <interactant intactId="EBI-3923210">
        <id>Q8TDR4</id>
    </interactant>
    <interactant intactId="EBI-6875961">
        <id>P02489</id>
        <label>CRYAA</label>
    </interactant>
    <organismsDiffer>false</organismsDiffer>
    <experiments>3</experiments>
</comment>
<comment type="interaction">
    <interactant intactId="EBI-3923210">
        <id>Q8TDR4</id>
    </interactant>
    <interactant intactId="EBI-77293">
        <id>O43293</id>
        <label>DAPK3</label>
    </interactant>
    <organismsDiffer>false</organismsDiffer>
    <experiments>5</experiments>
</comment>
<comment type="interaction">
    <interactant intactId="EBI-3923210">
        <id>Q8TDR4</id>
    </interactant>
    <interactant intactId="EBI-701903">
        <id>Q14192</id>
        <label>FHL2</label>
    </interactant>
    <organismsDiffer>false</organismsDiffer>
    <experiments>3</experiments>
</comment>
<comment type="interaction">
    <interactant intactId="EBI-3923210">
        <id>Q8TDR4</id>
    </interactant>
    <interactant intactId="EBI-725515">
        <id>O43559</id>
        <label>FRS3</label>
    </interactant>
    <organismsDiffer>false</organismsDiffer>
    <experiments>3</experiments>
</comment>
<comment type="interaction">
    <interactant intactId="EBI-3923210">
        <id>Q8TDR4</id>
    </interactant>
    <interactant intactId="EBI-717919">
        <id>Q4V328</id>
        <label>GRIPAP1</label>
    </interactant>
    <organismsDiffer>false</organismsDiffer>
    <experiments>5</experiments>
</comment>
<comment type="interaction">
    <interactant intactId="EBI-3923210">
        <id>Q8TDR4</id>
    </interactant>
    <interactant intactId="EBI-25860013">
        <id>P28799-2</id>
        <label>GRN</label>
    </interactant>
    <organismsDiffer>false</organismsDiffer>
    <experiments>3</experiments>
</comment>
<comment type="interaction">
    <interactant intactId="EBI-3923210">
        <id>Q8TDR4</id>
    </interactant>
    <interactant intactId="EBI-466029">
        <id>P42858</id>
        <label>HTT</label>
    </interactant>
    <organismsDiffer>false</organismsDiffer>
    <experiments>3</experiments>
</comment>
<comment type="interaction">
    <interactant intactId="EBI-3923210">
        <id>Q8TDR4</id>
    </interactant>
    <interactant intactId="EBI-2432309">
        <id>Q92876</id>
        <label>KLK6</label>
    </interactant>
    <organismsDiffer>false</organismsDiffer>
    <experiments>3</experiments>
</comment>
<comment type="interaction">
    <interactant intactId="EBI-3923210">
        <id>Q8TDR4</id>
    </interactant>
    <interactant intactId="EBI-8639312">
        <id>P25800</id>
        <label>LMO1</label>
    </interactant>
    <organismsDiffer>false</organismsDiffer>
    <experiments>3</experiments>
</comment>
<comment type="interaction">
    <interactant intactId="EBI-3923210">
        <id>Q8TDR4</id>
    </interactant>
    <interactant intactId="EBI-11959475">
        <id>P25791-3</id>
        <label>LMO2</label>
    </interactant>
    <organismsDiffer>false</organismsDiffer>
    <experiments>3</experiments>
</comment>
<comment type="interaction">
    <interactant intactId="EBI-3923210">
        <id>Q8TDR4</id>
    </interactant>
    <interactant intactId="EBI-11742507">
        <id>Q8TAP4-4</id>
        <label>LMO3</label>
    </interactant>
    <organismsDiffer>false</organismsDiffer>
    <experiments>3</experiments>
</comment>
<comment type="interaction">
    <interactant intactId="EBI-3923210">
        <id>Q8TDR4</id>
    </interactant>
    <interactant intactId="EBI-713568">
        <id>P45984</id>
        <label>MAPK9</label>
    </interactant>
    <organismsDiffer>false</organismsDiffer>
    <experiments>3</experiments>
</comment>
<comment type="interaction">
    <interactant intactId="EBI-3923210">
        <id>Q8TDR4</id>
    </interactant>
    <interactant intactId="EBI-1048159">
        <id>P55081</id>
        <label>MFAP1</label>
    </interactant>
    <organismsDiffer>false</organismsDiffer>
    <experiments>3</experiments>
</comment>
<comment type="interaction">
    <interactant intactId="EBI-3923210">
        <id>Q8TDR4</id>
    </interactant>
    <interactant intactId="EBI-3943670">
        <id>Q14582</id>
        <label>MXD4</label>
    </interactant>
    <organismsDiffer>false</organismsDiffer>
    <experiments>6</experiments>
</comment>
<comment type="interaction">
    <interactant intactId="EBI-3923210">
        <id>Q8TDR4</id>
    </interactant>
    <interactant intactId="EBI-713635">
        <id>O43639</id>
        <label>NCK2</label>
    </interactant>
    <organismsDiffer>false</organismsDiffer>
    <experiments>3</experiments>
</comment>
<comment type="interaction">
    <interactant intactId="EBI-3923210">
        <id>Q8TDR4</id>
    </interactant>
    <interactant intactId="EBI-10178578">
        <id>I6L9F6</id>
        <label>NEFL</label>
    </interactant>
    <organismsDiffer>false</organismsDiffer>
    <experiments>3</experiments>
</comment>
<comment type="interaction">
    <interactant intactId="EBI-3923210">
        <id>Q8TDR4</id>
    </interactant>
    <interactant intactId="EBI-475646">
        <id>P07196</id>
        <label>NEFL</label>
    </interactant>
    <organismsDiffer>false</organismsDiffer>
    <experiments>3</experiments>
</comment>
<comment type="interaction">
    <interactant intactId="EBI-3923210">
        <id>Q8TDR4</id>
    </interactant>
    <interactant intactId="EBI-741158">
        <id>Q96HA8</id>
        <label>NTAQ1</label>
    </interactant>
    <organismsDiffer>false</organismsDiffer>
    <experiments>3</experiments>
</comment>
<comment type="interaction">
    <interactant intactId="EBI-3923210">
        <id>Q8TDR4</id>
    </interactant>
    <interactant intactId="EBI-398874">
        <id>Q9UBU9</id>
        <label>NXF1</label>
    </interactant>
    <organismsDiffer>false</organismsDiffer>
    <experiments>3</experiments>
</comment>
<comment type="interaction">
    <interactant intactId="EBI-3923210">
        <id>Q8TDR4</id>
    </interactant>
    <interactant intactId="EBI-1307">
        <id>Q13153</id>
        <label>PAK1</label>
    </interactant>
    <organismsDiffer>false</organismsDiffer>
    <experiments>3</experiments>
</comment>
<comment type="interaction">
    <interactant intactId="EBI-3923210">
        <id>Q8TDR4</id>
    </interactant>
    <interactant intactId="EBI-949799">
        <id>P05129</id>
        <label>PRKCG</label>
    </interactant>
    <organismsDiffer>false</organismsDiffer>
    <experiments>3</experiments>
</comment>
<comment type="interaction">
    <interactant intactId="EBI-3923210">
        <id>Q8TDR4</id>
    </interactant>
    <interactant intactId="EBI-752074">
        <id>P41219</id>
        <label>PRPH</label>
    </interactant>
    <organismsDiffer>false</organismsDiffer>
    <experiments>6</experiments>
</comment>
<comment type="interaction">
    <interactant intactId="EBI-3923210">
        <id>Q8TDR4</id>
    </interactant>
    <interactant intactId="EBI-749285">
        <id>Q15311</id>
        <label>RALBP1</label>
    </interactant>
    <organismsDiffer>false</organismsDiffer>
    <experiments>3</experiments>
</comment>
<comment type="interaction">
    <interactant intactId="EBI-3923210">
        <id>Q8TDR4</id>
    </interactant>
    <interactant intactId="EBI-358489">
        <id>Q96GM5</id>
        <label>SMARCD1</label>
    </interactant>
    <organismsDiffer>false</organismsDiffer>
    <experiments>3</experiments>
</comment>
<comment type="interaction">
    <interactant intactId="EBI-3923210">
        <id>Q8TDR4</id>
    </interactant>
    <interactant intactId="EBI-11955057">
        <id>Q8N8B7-2</id>
        <label>TCEANC</label>
    </interactant>
    <organismsDiffer>false</organismsDiffer>
    <experiments>3</experiments>
</comment>
<comment type="interaction">
    <interactant intactId="EBI-3923210">
        <id>Q8TDR4</id>
    </interactant>
    <interactant intactId="EBI-3923210">
        <id>Q8TDR4</id>
        <label>TCP10L</label>
    </interactant>
    <organismsDiffer>false</organismsDiffer>
    <experiments>2</experiments>
</comment>
<comment type="interaction">
    <interactant intactId="EBI-3923210">
        <id>Q8TDR4</id>
    </interactant>
    <interactant intactId="EBI-3918381">
        <id>Q96PN8</id>
        <label>TSSK3</label>
    </interactant>
    <organismsDiffer>false</organismsDiffer>
    <experiments>3</experiments>
</comment>
<comment type="interaction">
    <interactant intactId="EBI-3923210">
        <id>Q8TDR4</id>
    </interactant>
    <interactant intactId="EBI-720609">
        <id>O76024</id>
        <label>WFS1</label>
    </interactant>
    <organismsDiffer>false</organismsDiffer>
    <experiments>3</experiments>
</comment>
<comment type="subcellular location">
    <subcellularLocation>
        <location evidence="4 6">Nucleus</location>
    </subcellularLocation>
</comment>
<comment type="tissue specificity">
    <text evidence="4 6">Expressed in liver and testis. Expressed in the seminiferous tubules (at protein level).</text>
</comment>
<comment type="similarity">
    <text evidence="10">Belongs to the TCP10 family.</text>
</comment>
<accession>Q8TDR4</accession>
<accession>Q53EW0</accession>
<accession>Q96LN5</accession>